<sequence>MKIKQLPAIFEPARPVLQKIEEAGYEAYFVGGCVRDTILHDEIHDIDIATSAYPSEIKAIFNHTVDTGIEHGTVMILDHGTGYETTTFRTESGYQDYRRPDKVTFVRSLSEDLQRRDFTINALALREDGEVIDLFDGLEDLQKHLIKAVGNPNERFHEDALRMMRAVRFASKLDFVIDTATLKGIKENAPLLEKIAVERIRVELEKLLLGQNPVAGLKDFIATGLYQYCPGLENAQAALSALLILNQWHLENEAQLWSVLGLQLQLDQKEIGKFLKKWKTANDLIAQVKKVVPAVQAIRQRALTPTLMFNTGETALHDANQVAKLYGWAIDDEELQKAYQKLPIKNAKELAIDGRVLITKAGVKPGPLMGKILQQLTLAVVNGEIANNATVLLEKVEEITKEG</sequence>
<gene>
    <name evidence="1" type="primary">cca</name>
    <name type="ordered locus">Lreu_0767</name>
</gene>
<organism>
    <name type="scientific">Limosilactobacillus reuteri (strain DSM 20016)</name>
    <name type="common">Lactobacillus reuteri</name>
    <dbReference type="NCBI Taxonomy" id="557436"/>
    <lineage>
        <taxon>Bacteria</taxon>
        <taxon>Bacillati</taxon>
        <taxon>Bacillota</taxon>
        <taxon>Bacilli</taxon>
        <taxon>Lactobacillales</taxon>
        <taxon>Lactobacillaceae</taxon>
        <taxon>Limosilactobacillus</taxon>
    </lineage>
</organism>
<protein>
    <recommendedName>
        <fullName evidence="1">CCA-adding enzyme</fullName>
        <ecNumber evidence="1">2.7.7.72</ecNumber>
    </recommendedName>
    <alternativeName>
        <fullName evidence="1">CCA tRNA nucleotidyltransferase</fullName>
    </alternativeName>
    <alternativeName>
        <fullName evidence="1">tRNA CCA-pyrophosphorylase</fullName>
    </alternativeName>
    <alternativeName>
        <fullName evidence="1">tRNA adenylyl-/cytidylyl- transferase</fullName>
    </alternativeName>
    <alternativeName>
        <fullName evidence="1">tRNA nucleotidyltransferase</fullName>
    </alternativeName>
    <alternativeName>
        <fullName evidence="1">tRNA-NT</fullName>
    </alternativeName>
</protein>
<proteinExistence type="inferred from homology"/>
<feature type="chain" id="PRO_1000067293" description="CCA-adding enzyme">
    <location>
        <begin position="1"/>
        <end position="403"/>
    </location>
</feature>
<feature type="binding site" evidence="1">
    <location>
        <position position="32"/>
    </location>
    <ligand>
        <name>ATP</name>
        <dbReference type="ChEBI" id="CHEBI:30616"/>
    </ligand>
</feature>
<feature type="binding site" evidence="1">
    <location>
        <position position="32"/>
    </location>
    <ligand>
        <name>CTP</name>
        <dbReference type="ChEBI" id="CHEBI:37563"/>
    </ligand>
</feature>
<feature type="binding site" evidence="1">
    <location>
        <position position="35"/>
    </location>
    <ligand>
        <name>ATP</name>
        <dbReference type="ChEBI" id="CHEBI:30616"/>
    </ligand>
</feature>
<feature type="binding site" evidence="1">
    <location>
        <position position="35"/>
    </location>
    <ligand>
        <name>CTP</name>
        <dbReference type="ChEBI" id="CHEBI:37563"/>
    </ligand>
</feature>
<feature type="binding site" evidence="1">
    <location>
        <position position="45"/>
    </location>
    <ligand>
        <name>Mg(2+)</name>
        <dbReference type="ChEBI" id="CHEBI:18420"/>
    </ligand>
</feature>
<feature type="binding site" evidence="1">
    <location>
        <position position="47"/>
    </location>
    <ligand>
        <name>Mg(2+)</name>
        <dbReference type="ChEBI" id="CHEBI:18420"/>
    </ligand>
</feature>
<feature type="binding site" evidence="1">
    <location>
        <position position="116"/>
    </location>
    <ligand>
        <name>ATP</name>
        <dbReference type="ChEBI" id="CHEBI:30616"/>
    </ligand>
</feature>
<feature type="binding site" evidence="1">
    <location>
        <position position="116"/>
    </location>
    <ligand>
        <name>CTP</name>
        <dbReference type="ChEBI" id="CHEBI:37563"/>
    </ligand>
</feature>
<feature type="binding site" evidence="1">
    <location>
        <position position="159"/>
    </location>
    <ligand>
        <name>ATP</name>
        <dbReference type="ChEBI" id="CHEBI:30616"/>
    </ligand>
</feature>
<feature type="binding site" evidence="1">
    <location>
        <position position="159"/>
    </location>
    <ligand>
        <name>CTP</name>
        <dbReference type="ChEBI" id="CHEBI:37563"/>
    </ligand>
</feature>
<feature type="binding site" evidence="1">
    <location>
        <position position="162"/>
    </location>
    <ligand>
        <name>ATP</name>
        <dbReference type="ChEBI" id="CHEBI:30616"/>
    </ligand>
</feature>
<feature type="binding site" evidence="1">
    <location>
        <position position="162"/>
    </location>
    <ligand>
        <name>CTP</name>
        <dbReference type="ChEBI" id="CHEBI:37563"/>
    </ligand>
</feature>
<feature type="binding site" evidence="1">
    <location>
        <position position="165"/>
    </location>
    <ligand>
        <name>ATP</name>
        <dbReference type="ChEBI" id="CHEBI:30616"/>
    </ligand>
</feature>
<feature type="binding site" evidence="1">
    <location>
        <position position="165"/>
    </location>
    <ligand>
        <name>CTP</name>
        <dbReference type="ChEBI" id="CHEBI:37563"/>
    </ligand>
</feature>
<feature type="binding site" evidence="1">
    <location>
        <position position="168"/>
    </location>
    <ligand>
        <name>ATP</name>
        <dbReference type="ChEBI" id="CHEBI:30616"/>
    </ligand>
</feature>
<feature type="binding site" evidence="1">
    <location>
        <position position="168"/>
    </location>
    <ligand>
        <name>CTP</name>
        <dbReference type="ChEBI" id="CHEBI:37563"/>
    </ligand>
</feature>
<comment type="function">
    <text evidence="1">Catalyzes the addition and repair of the essential 3'-terminal CCA sequence in tRNAs without using a nucleic acid template. Adds these three nucleotides in the order of C, C, and A to the tRNA nucleotide-73, using CTP and ATP as substrates and producing inorganic pyrophosphate. tRNA 3'-terminal CCA addition is required both for tRNA processing and repair. Also involved in tRNA surveillance by mediating tandem CCA addition to generate a CCACCA at the 3' terminus of unstable tRNAs. While stable tRNAs receive only 3'-terminal CCA, unstable tRNAs are marked with CCACCA and rapidly degraded.</text>
</comment>
<comment type="catalytic activity">
    <reaction evidence="1">
        <text>a tRNA precursor + 2 CTP + ATP = a tRNA with a 3' CCA end + 3 diphosphate</text>
        <dbReference type="Rhea" id="RHEA:14433"/>
        <dbReference type="Rhea" id="RHEA-COMP:10465"/>
        <dbReference type="Rhea" id="RHEA-COMP:10468"/>
        <dbReference type="ChEBI" id="CHEBI:30616"/>
        <dbReference type="ChEBI" id="CHEBI:33019"/>
        <dbReference type="ChEBI" id="CHEBI:37563"/>
        <dbReference type="ChEBI" id="CHEBI:74896"/>
        <dbReference type="ChEBI" id="CHEBI:83071"/>
        <dbReference type="EC" id="2.7.7.72"/>
    </reaction>
</comment>
<comment type="catalytic activity">
    <reaction evidence="1">
        <text>a tRNA with a 3' CCA end + 2 CTP + ATP = a tRNA with a 3' CCACCA end + 3 diphosphate</text>
        <dbReference type="Rhea" id="RHEA:76235"/>
        <dbReference type="Rhea" id="RHEA-COMP:10468"/>
        <dbReference type="Rhea" id="RHEA-COMP:18655"/>
        <dbReference type="ChEBI" id="CHEBI:30616"/>
        <dbReference type="ChEBI" id="CHEBI:33019"/>
        <dbReference type="ChEBI" id="CHEBI:37563"/>
        <dbReference type="ChEBI" id="CHEBI:83071"/>
        <dbReference type="ChEBI" id="CHEBI:195187"/>
    </reaction>
    <physiologicalReaction direction="left-to-right" evidence="1">
        <dbReference type="Rhea" id="RHEA:76236"/>
    </physiologicalReaction>
</comment>
<comment type="cofactor">
    <cofactor evidence="1">
        <name>Mg(2+)</name>
        <dbReference type="ChEBI" id="CHEBI:18420"/>
    </cofactor>
</comment>
<comment type="subunit">
    <text evidence="1">Homodimer.</text>
</comment>
<comment type="miscellaneous">
    <text evidence="1">A single active site specifically recognizes both ATP and CTP and is responsible for their addition.</text>
</comment>
<comment type="similarity">
    <text evidence="1">Belongs to the tRNA nucleotidyltransferase/poly(A) polymerase family. Bacterial CCA-adding enzyme type 3 subfamily.</text>
</comment>
<dbReference type="EC" id="2.7.7.72" evidence="1"/>
<dbReference type="EMBL" id="CP000705">
    <property type="protein sequence ID" value="ABQ83031.1"/>
    <property type="molecule type" value="Genomic_DNA"/>
</dbReference>
<dbReference type="RefSeq" id="WP_003668104.1">
    <property type="nucleotide sequence ID" value="NC_009513.1"/>
</dbReference>
<dbReference type="SMR" id="A5VJK7"/>
<dbReference type="STRING" id="557436.Lreu_0767"/>
<dbReference type="KEGG" id="lre:Lreu_0767"/>
<dbReference type="PATRIC" id="fig|557436.17.peg.461"/>
<dbReference type="eggNOG" id="COG0617">
    <property type="taxonomic scope" value="Bacteria"/>
</dbReference>
<dbReference type="HOGENOM" id="CLU_015961_3_1_9"/>
<dbReference type="Proteomes" id="UP000001991">
    <property type="component" value="Chromosome"/>
</dbReference>
<dbReference type="GO" id="GO:0005524">
    <property type="term" value="F:ATP binding"/>
    <property type="evidence" value="ECO:0007669"/>
    <property type="project" value="UniProtKB-UniRule"/>
</dbReference>
<dbReference type="GO" id="GO:0004810">
    <property type="term" value="F:CCA tRNA nucleotidyltransferase activity"/>
    <property type="evidence" value="ECO:0007669"/>
    <property type="project" value="UniProtKB-UniRule"/>
</dbReference>
<dbReference type="GO" id="GO:0000287">
    <property type="term" value="F:magnesium ion binding"/>
    <property type="evidence" value="ECO:0007669"/>
    <property type="project" value="UniProtKB-UniRule"/>
</dbReference>
<dbReference type="GO" id="GO:0000049">
    <property type="term" value="F:tRNA binding"/>
    <property type="evidence" value="ECO:0007669"/>
    <property type="project" value="UniProtKB-UniRule"/>
</dbReference>
<dbReference type="GO" id="GO:0042245">
    <property type="term" value="P:RNA repair"/>
    <property type="evidence" value="ECO:0007669"/>
    <property type="project" value="UniProtKB-KW"/>
</dbReference>
<dbReference type="GO" id="GO:0001680">
    <property type="term" value="P:tRNA 3'-terminal CCA addition"/>
    <property type="evidence" value="ECO:0007669"/>
    <property type="project" value="UniProtKB-UniRule"/>
</dbReference>
<dbReference type="CDD" id="cd05398">
    <property type="entry name" value="NT_ClassII-CCAase"/>
    <property type="match status" value="1"/>
</dbReference>
<dbReference type="Gene3D" id="1.10.110.30">
    <property type="match status" value="1"/>
</dbReference>
<dbReference type="Gene3D" id="1.10.246.80">
    <property type="match status" value="1"/>
</dbReference>
<dbReference type="Gene3D" id="1.20.58.560">
    <property type="match status" value="1"/>
</dbReference>
<dbReference type="Gene3D" id="3.30.460.10">
    <property type="entry name" value="Beta Polymerase, domain 2"/>
    <property type="match status" value="1"/>
</dbReference>
<dbReference type="HAMAP" id="MF_01263">
    <property type="entry name" value="CCA_bact_type3"/>
    <property type="match status" value="1"/>
</dbReference>
<dbReference type="InterPro" id="IPR050264">
    <property type="entry name" value="Bact_CCA-adding_enz_type3_sf"/>
</dbReference>
<dbReference type="InterPro" id="IPR032810">
    <property type="entry name" value="CCA-adding_enz_C"/>
</dbReference>
<dbReference type="InterPro" id="IPR023068">
    <property type="entry name" value="CCA-adding_enz_firmicutes"/>
</dbReference>
<dbReference type="InterPro" id="IPR043519">
    <property type="entry name" value="NT_sf"/>
</dbReference>
<dbReference type="InterPro" id="IPR002646">
    <property type="entry name" value="PolA_pol_head_dom"/>
</dbReference>
<dbReference type="InterPro" id="IPR032828">
    <property type="entry name" value="PolyA_RNA-bd"/>
</dbReference>
<dbReference type="NCBIfam" id="NF009814">
    <property type="entry name" value="PRK13299.1"/>
    <property type="match status" value="1"/>
</dbReference>
<dbReference type="PANTHER" id="PTHR46173">
    <property type="entry name" value="CCA TRNA NUCLEOTIDYLTRANSFERASE 1, MITOCHONDRIAL"/>
    <property type="match status" value="1"/>
</dbReference>
<dbReference type="PANTHER" id="PTHR46173:SF1">
    <property type="entry name" value="CCA TRNA NUCLEOTIDYLTRANSFERASE 1, MITOCHONDRIAL"/>
    <property type="match status" value="1"/>
</dbReference>
<dbReference type="Pfam" id="PF01743">
    <property type="entry name" value="PolyA_pol"/>
    <property type="match status" value="1"/>
</dbReference>
<dbReference type="Pfam" id="PF12627">
    <property type="entry name" value="PolyA_pol_RNAbd"/>
    <property type="match status" value="1"/>
</dbReference>
<dbReference type="Pfam" id="PF13735">
    <property type="entry name" value="tRNA_NucTran2_2"/>
    <property type="match status" value="1"/>
</dbReference>
<dbReference type="SUPFAM" id="SSF81301">
    <property type="entry name" value="Nucleotidyltransferase"/>
    <property type="match status" value="1"/>
</dbReference>
<dbReference type="SUPFAM" id="SSF81891">
    <property type="entry name" value="Poly A polymerase C-terminal region-like"/>
    <property type="match status" value="1"/>
</dbReference>
<accession>A5VJK7</accession>
<evidence type="ECO:0000255" key="1">
    <source>
        <dbReference type="HAMAP-Rule" id="MF_01263"/>
    </source>
</evidence>
<reference key="1">
    <citation type="journal article" date="2011" name="PLoS Genet.">
        <title>The evolution of host specialization in the vertebrate gut symbiont Lactobacillus reuteri.</title>
        <authorList>
            <person name="Frese S.A."/>
            <person name="Benson A.K."/>
            <person name="Tannock G.W."/>
            <person name="Loach D.M."/>
            <person name="Kim J."/>
            <person name="Zhang M."/>
            <person name="Oh P.L."/>
            <person name="Heng N.C."/>
            <person name="Patil P.B."/>
            <person name="Juge N."/>
            <person name="Mackenzie D.A."/>
            <person name="Pearson B.M."/>
            <person name="Lapidus A."/>
            <person name="Dalin E."/>
            <person name="Tice H."/>
            <person name="Goltsman E."/>
            <person name="Land M."/>
            <person name="Hauser L."/>
            <person name="Ivanova N."/>
            <person name="Kyrpides N.C."/>
            <person name="Walter J."/>
        </authorList>
    </citation>
    <scope>NUCLEOTIDE SEQUENCE [LARGE SCALE GENOMIC DNA]</scope>
    <source>
        <strain>DSM 20016</strain>
    </source>
</reference>
<keyword id="KW-0067">ATP-binding</keyword>
<keyword id="KW-0460">Magnesium</keyword>
<keyword id="KW-0479">Metal-binding</keyword>
<keyword id="KW-0547">Nucleotide-binding</keyword>
<keyword id="KW-0548">Nucleotidyltransferase</keyword>
<keyword id="KW-1185">Reference proteome</keyword>
<keyword id="KW-0692">RNA repair</keyword>
<keyword id="KW-0694">RNA-binding</keyword>
<keyword id="KW-0808">Transferase</keyword>
<keyword id="KW-0819">tRNA processing</keyword>
<name>CCA_LIMRD</name>